<dbReference type="EMBL" id="AL009126">
    <property type="protein sequence ID" value="CAB13920.1"/>
    <property type="molecule type" value="Genomic_DNA"/>
</dbReference>
<dbReference type="RefSeq" id="NP_389910.1">
    <property type="nucleotide sequence ID" value="NC_000964.3"/>
</dbReference>
<dbReference type="RefSeq" id="WP_004399428.1">
    <property type="nucleotide sequence ID" value="NZ_OZ025638.1"/>
</dbReference>
<dbReference type="PDB" id="2AXP">
    <property type="method" value="X-ray"/>
    <property type="resolution" value="2.50 A"/>
    <property type="chains" value="A/B=1-165"/>
</dbReference>
<dbReference type="PDB" id="3KB2">
    <property type="method" value="X-ray"/>
    <property type="resolution" value="2.20 A"/>
    <property type="chains" value="A/B=1-165"/>
</dbReference>
<dbReference type="PDBsum" id="2AXP"/>
<dbReference type="PDBsum" id="3KB2"/>
<dbReference type="SMR" id="O31896"/>
<dbReference type="FunCoup" id="O31896">
    <property type="interactions" value="40"/>
</dbReference>
<dbReference type="STRING" id="224308.BSU20280"/>
<dbReference type="PaxDb" id="224308-BSU20280"/>
<dbReference type="EnsemblBacteria" id="CAB13920">
    <property type="protein sequence ID" value="CAB13920"/>
    <property type="gene ID" value="BSU_20280"/>
</dbReference>
<dbReference type="GeneID" id="939530"/>
<dbReference type="KEGG" id="bsu:BSU20280"/>
<dbReference type="PATRIC" id="fig|224308.179.peg.2218"/>
<dbReference type="eggNOG" id="COG0125">
    <property type="taxonomic scope" value="Bacteria"/>
</dbReference>
<dbReference type="InParanoid" id="O31896"/>
<dbReference type="OrthoDB" id="2924167at2"/>
<dbReference type="BioCyc" id="BSUB:BSU20280-MONOMER"/>
<dbReference type="EvolutionaryTrace" id="O31896"/>
<dbReference type="Proteomes" id="UP000001570">
    <property type="component" value="Chromosome"/>
</dbReference>
<dbReference type="GO" id="GO:0005737">
    <property type="term" value="C:cytoplasm"/>
    <property type="evidence" value="ECO:0000318"/>
    <property type="project" value="GO_Central"/>
</dbReference>
<dbReference type="GO" id="GO:0005829">
    <property type="term" value="C:cytosol"/>
    <property type="evidence" value="ECO:0000318"/>
    <property type="project" value="GO_Central"/>
</dbReference>
<dbReference type="GO" id="GO:0004798">
    <property type="term" value="F:dTMP kinase activity"/>
    <property type="evidence" value="ECO:0000318"/>
    <property type="project" value="GO_Central"/>
</dbReference>
<dbReference type="GO" id="GO:0006233">
    <property type="term" value="P:dTDP biosynthetic process"/>
    <property type="evidence" value="ECO:0000318"/>
    <property type="project" value="GO_Central"/>
</dbReference>
<dbReference type="GO" id="GO:0006235">
    <property type="term" value="P:dTTP biosynthetic process"/>
    <property type="evidence" value="ECO:0000318"/>
    <property type="project" value="GO_Central"/>
</dbReference>
<dbReference type="GO" id="GO:0006227">
    <property type="term" value="P:dUDP biosynthetic process"/>
    <property type="evidence" value="ECO:0000318"/>
    <property type="project" value="GO_Central"/>
</dbReference>
<dbReference type="Gene3D" id="3.40.50.300">
    <property type="entry name" value="P-loop containing nucleotide triphosphate hydrolases"/>
    <property type="match status" value="1"/>
</dbReference>
<dbReference type="InterPro" id="IPR027417">
    <property type="entry name" value="P-loop_NTPase"/>
</dbReference>
<dbReference type="SUPFAM" id="SSF52540">
    <property type="entry name" value="P-loop containing nucleoside triphosphate hydrolases"/>
    <property type="match status" value="1"/>
</dbReference>
<evidence type="ECO:0007829" key="1">
    <source>
        <dbReference type="PDB" id="2AXP"/>
    </source>
</evidence>
<evidence type="ECO:0007829" key="2">
    <source>
        <dbReference type="PDB" id="3KB2"/>
    </source>
</evidence>
<protein>
    <recommendedName>
        <fullName>SPbeta prophage-derived uncharacterized protein YorR</fullName>
    </recommendedName>
</protein>
<keyword id="KW-0002">3D-structure</keyword>
<keyword id="KW-1185">Reference proteome</keyword>
<accession>O31896</accession>
<proteinExistence type="evidence at protein level"/>
<organism>
    <name type="scientific">Bacillus subtilis (strain 168)</name>
    <dbReference type="NCBI Taxonomy" id="224308"/>
    <lineage>
        <taxon>Bacteria</taxon>
        <taxon>Bacillati</taxon>
        <taxon>Bacillota</taxon>
        <taxon>Bacilli</taxon>
        <taxon>Bacillales</taxon>
        <taxon>Bacillaceae</taxon>
        <taxon>Bacillus</taxon>
    </lineage>
</organism>
<sequence>MTLIILEGPDCCFKSTVAAKLSKELKYPIIKGSSFELAKSGNEKLFEHFNKLADEDNVIIDRFVYSNLVYAKKFKDYSILTERQLRFIEDKIKAKAKVVYLHADPSVIKKRLRVRGDEYIEGKDIDSILELYREVMSNAGLHTYSWDTGQWSSDEIAKDIIFLVE</sequence>
<reference key="1">
    <citation type="journal article" date="1997" name="Nature">
        <title>The complete genome sequence of the Gram-positive bacterium Bacillus subtilis.</title>
        <authorList>
            <person name="Kunst F."/>
            <person name="Ogasawara N."/>
            <person name="Moszer I."/>
            <person name="Albertini A.M."/>
            <person name="Alloni G."/>
            <person name="Azevedo V."/>
            <person name="Bertero M.G."/>
            <person name="Bessieres P."/>
            <person name="Bolotin A."/>
            <person name="Borchert S."/>
            <person name="Borriss R."/>
            <person name="Boursier L."/>
            <person name="Brans A."/>
            <person name="Braun M."/>
            <person name="Brignell S.C."/>
            <person name="Bron S."/>
            <person name="Brouillet S."/>
            <person name="Bruschi C.V."/>
            <person name="Caldwell B."/>
            <person name="Capuano V."/>
            <person name="Carter N.M."/>
            <person name="Choi S.-K."/>
            <person name="Codani J.-J."/>
            <person name="Connerton I.F."/>
            <person name="Cummings N.J."/>
            <person name="Daniel R.A."/>
            <person name="Denizot F."/>
            <person name="Devine K.M."/>
            <person name="Duesterhoeft A."/>
            <person name="Ehrlich S.D."/>
            <person name="Emmerson P.T."/>
            <person name="Entian K.-D."/>
            <person name="Errington J."/>
            <person name="Fabret C."/>
            <person name="Ferrari E."/>
            <person name="Foulger D."/>
            <person name="Fritz C."/>
            <person name="Fujita M."/>
            <person name="Fujita Y."/>
            <person name="Fuma S."/>
            <person name="Galizzi A."/>
            <person name="Galleron N."/>
            <person name="Ghim S.-Y."/>
            <person name="Glaser P."/>
            <person name="Goffeau A."/>
            <person name="Golightly E.J."/>
            <person name="Grandi G."/>
            <person name="Guiseppi G."/>
            <person name="Guy B.J."/>
            <person name="Haga K."/>
            <person name="Haiech J."/>
            <person name="Harwood C.R."/>
            <person name="Henaut A."/>
            <person name="Hilbert H."/>
            <person name="Holsappel S."/>
            <person name="Hosono S."/>
            <person name="Hullo M.-F."/>
            <person name="Itaya M."/>
            <person name="Jones L.-M."/>
            <person name="Joris B."/>
            <person name="Karamata D."/>
            <person name="Kasahara Y."/>
            <person name="Klaerr-Blanchard M."/>
            <person name="Klein C."/>
            <person name="Kobayashi Y."/>
            <person name="Koetter P."/>
            <person name="Koningstein G."/>
            <person name="Krogh S."/>
            <person name="Kumano M."/>
            <person name="Kurita K."/>
            <person name="Lapidus A."/>
            <person name="Lardinois S."/>
            <person name="Lauber J."/>
            <person name="Lazarevic V."/>
            <person name="Lee S.-M."/>
            <person name="Levine A."/>
            <person name="Liu H."/>
            <person name="Masuda S."/>
            <person name="Mauel C."/>
            <person name="Medigue C."/>
            <person name="Medina N."/>
            <person name="Mellado R.P."/>
            <person name="Mizuno M."/>
            <person name="Moestl D."/>
            <person name="Nakai S."/>
            <person name="Noback M."/>
            <person name="Noone D."/>
            <person name="O'Reilly M."/>
            <person name="Ogawa K."/>
            <person name="Ogiwara A."/>
            <person name="Oudega B."/>
            <person name="Park S.-H."/>
            <person name="Parro V."/>
            <person name="Pohl T.M."/>
            <person name="Portetelle D."/>
            <person name="Porwollik S."/>
            <person name="Prescott A.M."/>
            <person name="Presecan E."/>
            <person name="Pujic P."/>
            <person name="Purnelle B."/>
            <person name="Rapoport G."/>
            <person name="Rey M."/>
            <person name="Reynolds S."/>
            <person name="Rieger M."/>
            <person name="Rivolta C."/>
            <person name="Rocha E."/>
            <person name="Roche B."/>
            <person name="Rose M."/>
            <person name="Sadaie Y."/>
            <person name="Sato T."/>
            <person name="Scanlan E."/>
            <person name="Schleich S."/>
            <person name="Schroeter R."/>
            <person name="Scoffone F."/>
            <person name="Sekiguchi J."/>
            <person name="Sekowska A."/>
            <person name="Seror S.J."/>
            <person name="Serror P."/>
            <person name="Shin B.-S."/>
            <person name="Soldo B."/>
            <person name="Sorokin A."/>
            <person name="Tacconi E."/>
            <person name="Takagi T."/>
            <person name="Takahashi H."/>
            <person name="Takemaru K."/>
            <person name="Takeuchi M."/>
            <person name="Tamakoshi A."/>
            <person name="Tanaka T."/>
            <person name="Terpstra P."/>
            <person name="Tognoni A."/>
            <person name="Tosato V."/>
            <person name="Uchiyama S."/>
            <person name="Vandenbol M."/>
            <person name="Vannier F."/>
            <person name="Vassarotti A."/>
            <person name="Viari A."/>
            <person name="Wambutt R."/>
            <person name="Wedler E."/>
            <person name="Wedler H."/>
            <person name="Weitzenegger T."/>
            <person name="Winters P."/>
            <person name="Wipat A."/>
            <person name="Yamamoto H."/>
            <person name="Yamane K."/>
            <person name="Yasumoto K."/>
            <person name="Yata K."/>
            <person name="Yoshida K."/>
            <person name="Yoshikawa H.-F."/>
            <person name="Zumstein E."/>
            <person name="Yoshikawa H."/>
            <person name="Danchin A."/>
        </authorList>
    </citation>
    <scope>NUCLEOTIDE SEQUENCE [LARGE SCALE GENOMIC DNA]</scope>
    <source>
        <strain>168</strain>
    </source>
</reference>
<reference key="2">
    <citation type="submission" date="2005-09" db="PDB data bank">
        <title>Crystal structure of the hypothetical protein BSU20280 from Bacillus subtilis, NESG target SR256.</title>
        <authorList>
            <consortium name="Northeast structural genomics consortium (NESG)"/>
        </authorList>
    </citation>
    <scope>X-RAY CRYSTALLOGRAPHY (2.5 ANGSTROMS)</scope>
</reference>
<name>YORR_BACSU</name>
<feature type="chain" id="PRO_0000360635" description="SPbeta prophage-derived uncharacterized protein YorR">
    <location>
        <begin position="1"/>
        <end position="165"/>
    </location>
</feature>
<feature type="strand" evidence="2">
    <location>
        <begin position="3"/>
        <end position="7"/>
    </location>
</feature>
<feature type="strand" evidence="2">
    <location>
        <begin position="9"/>
        <end position="13"/>
    </location>
</feature>
<feature type="helix" evidence="2">
    <location>
        <begin position="14"/>
        <end position="25"/>
    </location>
</feature>
<feature type="strand" evidence="2">
    <location>
        <begin position="29"/>
        <end position="31"/>
    </location>
</feature>
<feature type="helix" evidence="2">
    <location>
        <begin position="35"/>
        <end position="38"/>
    </location>
</feature>
<feature type="helix" evidence="2">
    <location>
        <begin position="42"/>
        <end position="52"/>
    </location>
</feature>
<feature type="strand" evidence="2">
    <location>
        <begin position="57"/>
        <end position="62"/>
    </location>
</feature>
<feature type="helix" evidence="2">
    <location>
        <begin position="64"/>
        <end position="70"/>
    </location>
</feature>
<feature type="turn" evidence="2">
    <location>
        <begin position="71"/>
        <end position="73"/>
    </location>
</feature>
<feature type="strand" evidence="1">
    <location>
        <begin position="74"/>
        <end position="76"/>
    </location>
</feature>
<feature type="helix" evidence="2">
    <location>
        <begin position="82"/>
        <end position="92"/>
    </location>
</feature>
<feature type="turn" evidence="2">
    <location>
        <begin position="93"/>
        <end position="95"/>
    </location>
</feature>
<feature type="strand" evidence="2">
    <location>
        <begin position="96"/>
        <end position="102"/>
    </location>
</feature>
<feature type="helix" evidence="2">
    <location>
        <begin position="105"/>
        <end position="115"/>
    </location>
</feature>
<feature type="helix" evidence="2">
    <location>
        <begin position="122"/>
        <end position="137"/>
    </location>
</feature>
<feature type="strand" evidence="2">
    <location>
        <begin position="143"/>
        <end position="147"/>
    </location>
</feature>
<feature type="turn" evidence="2">
    <location>
        <begin position="148"/>
        <end position="150"/>
    </location>
</feature>
<feature type="helix" evidence="2">
    <location>
        <begin position="153"/>
        <end position="165"/>
    </location>
</feature>
<gene>
    <name type="primary">yorR</name>
    <name type="ordered locus">BSU20280</name>
</gene>